<dbReference type="EMBL" id="BC111246">
    <property type="status" value="NOT_ANNOTATED_CDS"/>
    <property type="molecule type" value="mRNA"/>
</dbReference>
<dbReference type="RefSeq" id="NP_001257875.1">
    <property type="nucleotide sequence ID" value="NM_001270946.1"/>
</dbReference>
<dbReference type="FunCoup" id="P0C1N9">
    <property type="interactions" value="2"/>
</dbReference>
<dbReference type="GeneID" id="514374"/>
<dbReference type="KEGG" id="bta:514374"/>
<dbReference type="CTD" id="84992"/>
<dbReference type="InParanoid" id="P0C1N9"/>
<dbReference type="UniPathway" id="UPA00196"/>
<dbReference type="Proteomes" id="UP000009136">
    <property type="component" value="Unplaced"/>
</dbReference>
<dbReference type="GO" id="GO:0000506">
    <property type="term" value="C:glycosylphosphatidylinositol-N-acetylglucosaminyltransferase (GPI-GnT) complex"/>
    <property type="evidence" value="ECO:0000318"/>
    <property type="project" value="GO_Central"/>
</dbReference>
<dbReference type="GO" id="GO:0006506">
    <property type="term" value="P:GPI anchor biosynthetic process"/>
    <property type="evidence" value="ECO:0000318"/>
    <property type="project" value="GO_Central"/>
</dbReference>
<dbReference type="InterPro" id="IPR029164">
    <property type="entry name" value="PIG-Y"/>
</dbReference>
<dbReference type="PANTHER" id="PTHR39235">
    <property type="entry name" value="PHOSPHATIDYLINOSITOL N-ACETYLGLUCOSAMINYLTRANSFERASE SUBUNIT Y"/>
    <property type="match status" value="1"/>
</dbReference>
<dbReference type="PANTHER" id="PTHR39235:SF1">
    <property type="entry name" value="PHOSPHATIDYLINOSITOL N-ACETYLGLUCOSAMINYLTRANSFERASE SUBUNIT Y"/>
    <property type="match status" value="1"/>
</dbReference>
<dbReference type="Pfam" id="PF15159">
    <property type="entry name" value="PIG-Y"/>
    <property type="match status" value="1"/>
</dbReference>
<evidence type="ECO:0000250" key="1">
    <source>
        <dbReference type="UniProtKB" id="Q3MUY2"/>
    </source>
</evidence>
<evidence type="ECO:0000255" key="2"/>
<gene>
    <name evidence="1" type="primary">PIGY</name>
</gene>
<protein>
    <recommendedName>
        <fullName evidence="1">Phosphatidylinositol N-acetylglucosaminyltransferase subunit Y</fullName>
    </recommendedName>
    <alternativeName>
        <fullName>Phosphatidylinositol-glycan biosynthesis class Y protein</fullName>
        <shortName>PIG-Y</shortName>
    </alternativeName>
</protein>
<accession>P0C1N9</accession>
<proteinExistence type="inferred from homology"/>
<feature type="chain" id="PRO_0000246310" description="Phosphatidylinositol N-acetylglucosaminyltransferase subunit Y">
    <location>
        <begin position="1"/>
        <end position="71"/>
    </location>
</feature>
<feature type="topological domain" description="Cytoplasmic" evidence="2">
    <location>
        <begin position="1"/>
        <end position="3"/>
    </location>
</feature>
<feature type="transmembrane region" description="Helical" evidence="2">
    <location>
        <begin position="4"/>
        <end position="26"/>
    </location>
</feature>
<feature type="topological domain" description="Lumenal" evidence="2">
    <location>
        <begin position="27"/>
        <end position="44"/>
    </location>
</feature>
<feature type="transmembrane region" description="Helical" evidence="2">
    <location>
        <begin position="45"/>
        <end position="65"/>
    </location>
</feature>
<feature type="topological domain" description="Cytoplasmic" evidence="2">
    <location>
        <begin position="66"/>
        <end position="71"/>
    </location>
</feature>
<comment type="function">
    <text evidence="1">Part of the glycosylphosphatidylinositol-N-acetylglucosaminyltransferase (GPI-GnT) complex that catalyzes the transfer of N-acetylglucosamine from UDP-N-acetylglucosamine to phosphatidylinositol and participates in the first step of GPI biosynthesis. May act by regulating the catalytic subunit PIGA.</text>
</comment>
<comment type="pathway">
    <text evidence="1">Glycolipid biosynthesis; glycosylphosphatidylinositol-anchor biosynthesis.</text>
</comment>
<comment type="subunit">
    <text evidence="1">Component of the glycosylphosphatidylinositol-N-acetylglucosaminyltransferase (GPI-GnT) complex composed at least by PIGA, PIGC, PIGH, PIGP, PIGQ, PIGY and DPM2. Interacts directly with PIGA; this interaction regulates glycosylphosphatidylinositol-N-acetylglucosaminyltransferase activity. Does not interact with Ras proteins.</text>
</comment>
<comment type="subcellular location">
    <subcellularLocation>
        <location evidence="1">Endoplasmic reticulum membrane</location>
        <topology evidence="1">Multi-pass membrane protein</topology>
    </subcellularLocation>
</comment>
<comment type="miscellaneous">
    <text>PREY is derived from the same bicistronic transcript that encodes these 2 different proteins.</text>
</comment>
<reference key="1">
    <citation type="submission" date="2005-08" db="EMBL/GenBank/DDBJ databases">
        <authorList>
            <consortium name="NIH - Mammalian Gene Collection (MGC) project"/>
        </authorList>
    </citation>
    <scope>NUCLEOTIDE SEQUENCE [LARGE SCALE MRNA]</scope>
    <source>
        <strain>Crossbred X Angus</strain>
        <tissue>Liver</tissue>
    </source>
</reference>
<organism>
    <name type="scientific">Bos taurus</name>
    <name type="common">Bovine</name>
    <dbReference type="NCBI Taxonomy" id="9913"/>
    <lineage>
        <taxon>Eukaryota</taxon>
        <taxon>Metazoa</taxon>
        <taxon>Chordata</taxon>
        <taxon>Craniata</taxon>
        <taxon>Vertebrata</taxon>
        <taxon>Euteleostomi</taxon>
        <taxon>Mammalia</taxon>
        <taxon>Eutheria</taxon>
        <taxon>Laurasiatheria</taxon>
        <taxon>Artiodactyla</taxon>
        <taxon>Ruminantia</taxon>
        <taxon>Pecora</taxon>
        <taxon>Bovidae</taxon>
        <taxon>Bovinae</taxon>
        <taxon>Bos</taxon>
    </lineage>
</organism>
<name>PIGY_BOVIN</name>
<keyword id="KW-0256">Endoplasmic reticulum</keyword>
<keyword id="KW-0337">GPI-anchor biosynthesis</keyword>
<keyword id="KW-0472">Membrane</keyword>
<keyword id="KW-1185">Reference proteome</keyword>
<keyword id="KW-0812">Transmembrane</keyword>
<keyword id="KW-1133">Transmembrane helix</keyword>
<sequence>MFLSLPMLTVLIPLVSLAGLFYSASVEDDFPQGCTSTTSLCFYSLLLPITIPVYVFFHLWTWMGIKLFRHN</sequence>